<comment type="function">
    <text evidence="3">Voltage-gated potassium channel inhibitor. Selectively and reversibly binds (Kd=0.77 nM) and blocks hKv1.3/KCNA3 potassium channels of human T-lymphocytes. Also shows a very weak effect on hKv1.2/KCNA2 (Kd=7.1 uM). Also reduces the fraction of CD40L expressing T cells that are stimulated by alphaCD3/alphaCD28.</text>
</comment>
<comment type="subcellular location">
    <subcellularLocation>
        <location evidence="7">Secreted</location>
    </subcellularLocation>
</comment>
<comment type="tissue specificity">
    <text evidence="7">Expressed by the venom gland.</text>
</comment>
<comment type="domain">
    <text evidence="1">Has the CSalpha/beta fold, which comprises one or two short alpha helices connected to anti-parallel beta-sheets stabilized by three or four disulfide bonds.</text>
</comment>
<comment type="domain">
    <text evidence="1">Has the structural arrangement of an alpha-helix connected to antiparallel beta-sheets by disulfide bonds (CS-alpha/beta).</text>
</comment>
<comment type="miscellaneous">
    <text evidence="3">Negative results: has very weak or no effect on many potassium channels (hKCa1.1/KCNMA1, hKCa3.1/KCNN4/IK/SK4, hKv1.1/KCNA1, hKv1.4/KCNA4, hKv1.5/KCNA5, rKv2.1/KCNB1, and hKv11.1/KCNH2/ERG1), and on the tested sodium channel (hNav1.5/SCN5A).</text>
</comment>
<comment type="similarity">
    <text evidence="6">Belongs to the short scorpion toxin superfamily. Potassium channel inhibitor family. Alpha-KTx 23 subfamily.</text>
</comment>
<sequence length="65" mass="6904">MKTSCLLTILLLSFLVAVAVAEGERSARAAAISCVGSPECPPKCRAQGCKNGKCMNRKCKCYYCG</sequence>
<protein>
    <recommendedName>
        <fullName evidence="4">Toxin VmKTx1</fullName>
    </recommendedName>
    <alternativeName>
        <fullName evidence="5">Toxin sVmKTx</fullName>
    </alternativeName>
</protein>
<organism>
    <name type="scientific">Vaejovis mexicanus smithi</name>
    <name type="common">Mexican scorpion</name>
    <name type="synonym">Vaejovis smithi</name>
    <dbReference type="NCBI Taxonomy" id="1562928"/>
    <lineage>
        <taxon>Eukaryota</taxon>
        <taxon>Metazoa</taxon>
        <taxon>Ecdysozoa</taxon>
        <taxon>Arthropoda</taxon>
        <taxon>Chelicerata</taxon>
        <taxon>Arachnida</taxon>
        <taxon>Scorpiones</taxon>
        <taxon>Iurida</taxon>
        <taxon>Chactoidea</taxon>
        <taxon>Vaejovidae</taxon>
        <taxon>Vaejovis</taxon>
    </lineage>
</organism>
<name>KA23N_VAEMS</name>
<proteinExistence type="evidence at protein level"/>
<dbReference type="EMBL" id="JZ818447">
    <property type="status" value="NOT_ANNOTATED_CDS"/>
    <property type="molecule type" value="mRNA"/>
</dbReference>
<dbReference type="SMR" id="P0DW84"/>
<dbReference type="GO" id="GO:0005576">
    <property type="term" value="C:extracellular region"/>
    <property type="evidence" value="ECO:0007669"/>
    <property type="project" value="UniProtKB-SubCell"/>
</dbReference>
<dbReference type="GO" id="GO:0008200">
    <property type="term" value="F:ion channel inhibitor activity"/>
    <property type="evidence" value="ECO:0007669"/>
    <property type="project" value="InterPro"/>
</dbReference>
<dbReference type="GO" id="GO:0015459">
    <property type="term" value="F:potassium channel regulator activity"/>
    <property type="evidence" value="ECO:0007669"/>
    <property type="project" value="UniProtKB-KW"/>
</dbReference>
<dbReference type="GO" id="GO:0090729">
    <property type="term" value="F:toxin activity"/>
    <property type="evidence" value="ECO:0007669"/>
    <property type="project" value="UniProtKB-KW"/>
</dbReference>
<dbReference type="Gene3D" id="3.30.30.10">
    <property type="entry name" value="Knottin, scorpion toxin-like"/>
    <property type="match status" value="1"/>
</dbReference>
<dbReference type="InterPro" id="IPR036574">
    <property type="entry name" value="Scorpion_toxin-like_sf"/>
</dbReference>
<dbReference type="InterPro" id="IPR001947">
    <property type="entry name" value="Scorpion_toxinS_K_inh"/>
</dbReference>
<dbReference type="Pfam" id="PF00451">
    <property type="entry name" value="Toxin_2"/>
    <property type="match status" value="1"/>
</dbReference>
<dbReference type="PRINTS" id="PR00286">
    <property type="entry name" value="CHARYBDTOXIN"/>
</dbReference>
<dbReference type="SUPFAM" id="SSF57095">
    <property type="entry name" value="Scorpion toxin-like"/>
    <property type="match status" value="1"/>
</dbReference>
<dbReference type="PROSITE" id="PS01138">
    <property type="entry name" value="SCORP_SHORT_TOXIN"/>
    <property type="match status" value="1"/>
</dbReference>
<evidence type="ECO:0000250" key="1">
    <source>
        <dbReference type="UniProtKB" id="P0DJ31"/>
    </source>
</evidence>
<evidence type="ECO:0000255" key="2"/>
<evidence type="ECO:0000269" key="3">
    <source>
    </source>
</evidence>
<evidence type="ECO:0000303" key="4">
    <source>
    </source>
</evidence>
<evidence type="ECO:0000303" key="5">
    <source>
    </source>
</evidence>
<evidence type="ECO:0000305" key="6"/>
<evidence type="ECO:0000305" key="7">
    <source>
    </source>
</evidence>
<accession>P0DW84</accession>
<keyword id="KW-0027">Amidation</keyword>
<keyword id="KW-1015">Disulfide bond</keyword>
<keyword id="KW-0872">Ion channel impairing toxin</keyword>
<keyword id="KW-0632">Potassium channel impairing toxin</keyword>
<keyword id="KW-0964">Secreted</keyword>
<keyword id="KW-0732">Signal</keyword>
<keyword id="KW-0800">Toxin</keyword>
<keyword id="KW-1220">Voltage-gated potassium channel impairing toxin</keyword>
<reference key="1">
    <citation type="journal article" date="2015" name="PLoS ONE">
        <title>Transcriptome analysis of scorpion species belonging to the Vaejovis genus.</title>
        <authorList>
            <person name="Quintero-Hernandez V."/>
            <person name="Ramirez-Carreto S."/>
            <person name="Romero-Gutierrez M.T."/>
            <person name="Valdez-Velazquez L.L."/>
            <person name="Becerril B."/>
            <person name="Possani L.D."/>
            <person name="Ortiz E."/>
        </authorList>
    </citation>
    <scope>NUCLEOTIDE SEQUENCE [MRNA]</scope>
    <source>
        <tissue>Venom gland</tissue>
    </source>
</reference>
<reference key="2">
    <citation type="journal article" date="2022" name="Biochem. Pharmacol.">
        <title>sVmKTx, a transcriptome analysis-based synthetic peptide analogue of Vm24, inhibits Kv1.3 channels of human T cells with improved selectivity.</title>
        <authorList>
            <person name="Csoti A."/>
            <person name="Del Carmen Najera Meza R."/>
            <person name="Bogar F."/>
            <person name="Tajti G."/>
            <person name="Szanto T.G."/>
            <person name="Varga Z."/>
            <person name="Gurrola G.B."/>
            <person name="Toth G.K."/>
            <person name="Possani L.D."/>
            <person name="Panyi G."/>
        </authorList>
    </citation>
    <scope>FUNCTION</scope>
    <scope>SYNTHESIS OF 29-65</scope>
    <scope>3D-STRUCTURE MODELING</scope>
    <scope>PROBABLE AMIDATION AT CYS-64</scope>
</reference>
<feature type="signal peptide" evidence="2">
    <location>
        <begin position="1"/>
        <end position="21"/>
    </location>
</feature>
<feature type="propeptide" id="PRO_0000456413" evidence="7">
    <location>
        <begin position="22"/>
        <end position="28"/>
    </location>
</feature>
<feature type="chain" id="PRO_0000456414" description="Toxin VmKTx1" evidence="7">
    <location>
        <begin position="29"/>
        <end position="64"/>
    </location>
</feature>
<feature type="site" description="Basic residue of the functional dyad" evidence="1">
    <location>
        <position position="53"/>
    </location>
</feature>
<feature type="site" description="Aromatic residue of the functional dyad" evidence="1">
    <location>
        <position position="62"/>
    </location>
</feature>
<feature type="modified residue" description="Cysteine amide" evidence="1 7">
    <location>
        <position position="64"/>
    </location>
</feature>
<feature type="disulfide bond" evidence="1">
    <location>
        <begin position="34"/>
        <end position="54"/>
    </location>
</feature>
<feature type="disulfide bond" evidence="1">
    <location>
        <begin position="40"/>
        <end position="59"/>
    </location>
</feature>
<feature type="disulfide bond" evidence="1">
    <location>
        <begin position="44"/>
        <end position="61"/>
    </location>
</feature>
<feature type="disulfide bond" evidence="1">
    <location>
        <begin position="49"/>
        <end position="64"/>
    </location>
</feature>